<dbReference type="EC" id="2.5.1.61" evidence="1"/>
<dbReference type="EMBL" id="AM233362">
    <property type="protein sequence ID" value="CAJ78581.1"/>
    <property type="molecule type" value="Genomic_DNA"/>
</dbReference>
<dbReference type="RefSeq" id="WP_003017764.1">
    <property type="nucleotide sequence ID" value="NZ_CP009694.1"/>
</dbReference>
<dbReference type="SMR" id="Q2A5R3"/>
<dbReference type="KEGG" id="ftl:FTL_0140"/>
<dbReference type="UniPathway" id="UPA00251">
    <property type="reaction ID" value="UER00319"/>
</dbReference>
<dbReference type="Proteomes" id="UP000001944">
    <property type="component" value="Chromosome"/>
</dbReference>
<dbReference type="GO" id="GO:0005737">
    <property type="term" value="C:cytoplasm"/>
    <property type="evidence" value="ECO:0007669"/>
    <property type="project" value="TreeGrafter"/>
</dbReference>
<dbReference type="GO" id="GO:0004418">
    <property type="term" value="F:hydroxymethylbilane synthase activity"/>
    <property type="evidence" value="ECO:0007669"/>
    <property type="project" value="UniProtKB-UniRule"/>
</dbReference>
<dbReference type="GO" id="GO:0006782">
    <property type="term" value="P:protoporphyrinogen IX biosynthetic process"/>
    <property type="evidence" value="ECO:0007669"/>
    <property type="project" value="UniProtKB-UniRule"/>
</dbReference>
<dbReference type="CDD" id="cd13646">
    <property type="entry name" value="PBP2_EcHMBS_like"/>
    <property type="match status" value="1"/>
</dbReference>
<dbReference type="FunFam" id="3.40.190.10:FF:000004">
    <property type="entry name" value="Porphobilinogen deaminase"/>
    <property type="match status" value="1"/>
</dbReference>
<dbReference type="FunFam" id="3.40.190.10:FF:000005">
    <property type="entry name" value="Porphobilinogen deaminase"/>
    <property type="match status" value="1"/>
</dbReference>
<dbReference type="Gene3D" id="3.40.190.10">
    <property type="entry name" value="Periplasmic binding protein-like II"/>
    <property type="match status" value="2"/>
</dbReference>
<dbReference type="Gene3D" id="3.30.160.40">
    <property type="entry name" value="Porphobilinogen deaminase, C-terminal domain"/>
    <property type="match status" value="1"/>
</dbReference>
<dbReference type="HAMAP" id="MF_00260">
    <property type="entry name" value="Porphobil_deam"/>
    <property type="match status" value="1"/>
</dbReference>
<dbReference type="InterPro" id="IPR000860">
    <property type="entry name" value="HemC"/>
</dbReference>
<dbReference type="InterPro" id="IPR022419">
    <property type="entry name" value="Porphobilin_deaminase_cofac_BS"/>
</dbReference>
<dbReference type="InterPro" id="IPR022417">
    <property type="entry name" value="Porphobilin_deaminase_N"/>
</dbReference>
<dbReference type="InterPro" id="IPR022418">
    <property type="entry name" value="Porphobilinogen_deaminase_C"/>
</dbReference>
<dbReference type="InterPro" id="IPR036803">
    <property type="entry name" value="Porphobilinogen_deaminase_C_sf"/>
</dbReference>
<dbReference type="NCBIfam" id="TIGR00212">
    <property type="entry name" value="hemC"/>
    <property type="match status" value="1"/>
</dbReference>
<dbReference type="PANTHER" id="PTHR11557">
    <property type="entry name" value="PORPHOBILINOGEN DEAMINASE"/>
    <property type="match status" value="1"/>
</dbReference>
<dbReference type="PANTHER" id="PTHR11557:SF0">
    <property type="entry name" value="PORPHOBILINOGEN DEAMINASE"/>
    <property type="match status" value="1"/>
</dbReference>
<dbReference type="Pfam" id="PF01379">
    <property type="entry name" value="Porphobil_deam"/>
    <property type="match status" value="1"/>
</dbReference>
<dbReference type="Pfam" id="PF03900">
    <property type="entry name" value="Porphobil_deamC"/>
    <property type="match status" value="1"/>
</dbReference>
<dbReference type="PIRSF" id="PIRSF001438">
    <property type="entry name" value="4pyrrol_synth_OHMeBilane_synth"/>
    <property type="match status" value="1"/>
</dbReference>
<dbReference type="PRINTS" id="PR00151">
    <property type="entry name" value="PORPHBDMNASE"/>
</dbReference>
<dbReference type="SUPFAM" id="SSF53850">
    <property type="entry name" value="Periplasmic binding protein-like II"/>
    <property type="match status" value="1"/>
</dbReference>
<dbReference type="SUPFAM" id="SSF54782">
    <property type="entry name" value="Porphobilinogen deaminase (hydroxymethylbilane synthase), C-terminal domain"/>
    <property type="match status" value="1"/>
</dbReference>
<dbReference type="PROSITE" id="PS00533">
    <property type="entry name" value="PORPHOBILINOGEN_DEAM"/>
    <property type="match status" value="1"/>
</dbReference>
<proteinExistence type="inferred from homology"/>
<sequence>MKQITIASRESKLALWQTNFVKNRIQSELNIPCEISTMKTQGDIILDQPLNKIGGKALFMKELEVAMLSNKADIAVHSLKDVPYQLPQGFCLAGFMPREDPRDAFVSNKYNSIDDLPKGAVVGTSSLRRKAQLLHYRDDLEIRDLRGNIQTRLSKLDNGDYDAIILASAGLIRLELVERITQFIPVEISLPAVGQGIVVIEALERDNDLLEKIQKLNCRESSRVATAERAFNQELKGGCHVAIGAYAELDNNQITLMAMVASSDGKKILKRKMIGDDPTKLGKLLAQEMIALGAYKILES</sequence>
<feature type="chain" id="PRO_0000304237" description="Porphobilinogen deaminase">
    <location>
        <begin position="1"/>
        <end position="300"/>
    </location>
</feature>
<feature type="modified residue" description="S-(dipyrrolylmethanemethyl)cysteine" evidence="1">
    <location>
        <position position="239"/>
    </location>
</feature>
<accession>Q2A5R3</accession>
<comment type="function">
    <text evidence="1">Tetrapolymerization of the monopyrrole PBG into the hydroxymethylbilane pre-uroporphyrinogen in several discrete steps.</text>
</comment>
<comment type="catalytic activity">
    <reaction evidence="1">
        <text>4 porphobilinogen + H2O = hydroxymethylbilane + 4 NH4(+)</text>
        <dbReference type="Rhea" id="RHEA:13185"/>
        <dbReference type="ChEBI" id="CHEBI:15377"/>
        <dbReference type="ChEBI" id="CHEBI:28938"/>
        <dbReference type="ChEBI" id="CHEBI:57845"/>
        <dbReference type="ChEBI" id="CHEBI:58126"/>
        <dbReference type="EC" id="2.5.1.61"/>
    </reaction>
</comment>
<comment type="cofactor">
    <cofactor evidence="1">
        <name>dipyrromethane</name>
        <dbReference type="ChEBI" id="CHEBI:60342"/>
    </cofactor>
    <text evidence="1">Binds 1 dipyrromethane group covalently.</text>
</comment>
<comment type="pathway">
    <text evidence="1">Porphyrin-containing compound metabolism; protoporphyrin-IX biosynthesis; coproporphyrinogen-III from 5-aminolevulinate: step 2/4.</text>
</comment>
<comment type="subunit">
    <text evidence="1">Monomer.</text>
</comment>
<comment type="miscellaneous">
    <text evidence="1">The porphobilinogen subunits are added to the dipyrromethane group.</text>
</comment>
<comment type="similarity">
    <text evidence="1">Belongs to the HMBS family.</text>
</comment>
<name>HEM3_FRATH</name>
<keyword id="KW-0627">Porphyrin biosynthesis</keyword>
<keyword id="KW-1185">Reference proteome</keyword>
<keyword id="KW-0808">Transferase</keyword>
<protein>
    <recommendedName>
        <fullName evidence="1">Porphobilinogen deaminase</fullName>
        <shortName evidence="1">PBG</shortName>
        <ecNumber evidence="1">2.5.1.61</ecNumber>
    </recommendedName>
    <alternativeName>
        <fullName evidence="1">Hydroxymethylbilane synthase</fullName>
        <shortName evidence="1">HMBS</shortName>
    </alternativeName>
    <alternativeName>
        <fullName evidence="1">Pre-uroporphyrinogen synthase</fullName>
    </alternativeName>
</protein>
<evidence type="ECO:0000255" key="1">
    <source>
        <dbReference type="HAMAP-Rule" id="MF_00260"/>
    </source>
</evidence>
<organism>
    <name type="scientific">Francisella tularensis subsp. holarctica (strain LVS)</name>
    <dbReference type="NCBI Taxonomy" id="376619"/>
    <lineage>
        <taxon>Bacteria</taxon>
        <taxon>Pseudomonadati</taxon>
        <taxon>Pseudomonadota</taxon>
        <taxon>Gammaproteobacteria</taxon>
        <taxon>Thiotrichales</taxon>
        <taxon>Francisellaceae</taxon>
        <taxon>Francisella</taxon>
    </lineage>
</organism>
<reference key="1">
    <citation type="submission" date="2006-03" db="EMBL/GenBank/DDBJ databases">
        <title>Complete genome sequence of Francisella tularensis LVS (Live Vaccine Strain).</title>
        <authorList>
            <person name="Chain P."/>
            <person name="Larimer F."/>
            <person name="Land M."/>
            <person name="Stilwagen S."/>
            <person name="Larsson P."/>
            <person name="Bearden S."/>
            <person name="Chu M."/>
            <person name="Oyston P."/>
            <person name="Forsman M."/>
            <person name="Andersson S."/>
            <person name="Lindler L."/>
            <person name="Titball R."/>
            <person name="Garcia E."/>
        </authorList>
    </citation>
    <scope>NUCLEOTIDE SEQUENCE [LARGE SCALE GENOMIC DNA]</scope>
    <source>
        <strain>LVS</strain>
    </source>
</reference>
<gene>
    <name evidence="1" type="primary">hemC</name>
    <name type="ordered locus">FTL_0140</name>
</gene>